<reference key="1">
    <citation type="journal article" date="2011" name="PLoS Genet.">
        <title>Genomic analysis of the necrotrophic fungal pathogens Sclerotinia sclerotiorum and Botrytis cinerea.</title>
        <authorList>
            <person name="Amselem J."/>
            <person name="Cuomo C.A."/>
            <person name="van Kan J.A.L."/>
            <person name="Viaud M."/>
            <person name="Benito E.P."/>
            <person name="Couloux A."/>
            <person name="Coutinho P.M."/>
            <person name="de Vries R.P."/>
            <person name="Dyer P.S."/>
            <person name="Fillinger S."/>
            <person name="Fournier E."/>
            <person name="Gout L."/>
            <person name="Hahn M."/>
            <person name="Kohn L."/>
            <person name="Lapalu N."/>
            <person name="Plummer K.M."/>
            <person name="Pradier J.-M."/>
            <person name="Quevillon E."/>
            <person name="Sharon A."/>
            <person name="Simon A."/>
            <person name="ten Have A."/>
            <person name="Tudzynski B."/>
            <person name="Tudzynski P."/>
            <person name="Wincker P."/>
            <person name="Andrew M."/>
            <person name="Anthouard V."/>
            <person name="Beever R.E."/>
            <person name="Beffa R."/>
            <person name="Benoit I."/>
            <person name="Bouzid O."/>
            <person name="Brault B."/>
            <person name="Chen Z."/>
            <person name="Choquer M."/>
            <person name="Collemare J."/>
            <person name="Cotton P."/>
            <person name="Danchin E.G."/>
            <person name="Da Silva C."/>
            <person name="Gautier A."/>
            <person name="Giraud C."/>
            <person name="Giraud T."/>
            <person name="Gonzalez C."/>
            <person name="Grossetete S."/>
            <person name="Gueldener U."/>
            <person name="Henrissat B."/>
            <person name="Howlett B.J."/>
            <person name="Kodira C."/>
            <person name="Kretschmer M."/>
            <person name="Lappartient A."/>
            <person name="Leroch M."/>
            <person name="Levis C."/>
            <person name="Mauceli E."/>
            <person name="Neuveglise C."/>
            <person name="Oeser B."/>
            <person name="Pearson M."/>
            <person name="Poulain J."/>
            <person name="Poussereau N."/>
            <person name="Quesneville H."/>
            <person name="Rascle C."/>
            <person name="Schumacher J."/>
            <person name="Segurens B."/>
            <person name="Sexton A."/>
            <person name="Silva E."/>
            <person name="Sirven C."/>
            <person name="Soanes D.M."/>
            <person name="Talbot N.J."/>
            <person name="Templeton M."/>
            <person name="Yandava C."/>
            <person name="Yarden O."/>
            <person name="Zeng Q."/>
            <person name="Rollins J.A."/>
            <person name="Lebrun M.-H."/>
            <person name="Dickman M."/>
        </authorList>
    </citation>
    <scope>NUCLEOTIDE SEQUENCE [LARGE SCALE GENOMIC DNA]</scope>
    <source>
        <strain>ATCC 18683 / 1980 / Ss-1</strain>
    </source>
</reference>
<protein>
    <recommendedName>
        <fullName evidence="1">Mitochondrial distribution and morphology protein 34</fullName>
    </recommendedName>
</protein>
<feature type="chain" id="PRO_0000384364" description="Mitochondrial distribution and morphology protein 34">
    <location>
        <begin position="1"/>
        <end position="563"/>
    </location>
</feature>
<feature type="domain" description="SMP-LTD" evidence="1">
    <location>
        <begin position="1"/>
        <end position="195"/>
    </location>
</feature>
<feature type="region of interest" description="Disordered" evidence="2">
    <location>
        <begin position="298"/>
        <end position="460"/>
    </location>
</feature>
<feature type="region of interest" description="Disordered" evidence="2">
    <location>
        <begin position="535"/>
        <end position="563"/>
    </location>
</feature>
<feature type="compositionally biased region" description="Polar residues" evidence="2">
    <location>
        <begin position="303"/>
        <end position="332"/>
    </location>
</feature>
<feature type="compositionally biased region" description="Polar residues" evidence="2">
    <location>
        <begin position="346"/>
        <end position="357"/>
    </location>
</feature>
<feature type="compositionally biased region" description="Basic residues" evidence="2">
    <location>
        <begin position="365"/>
        <end position="383"/>
    </location>
</feature>
<feature type="compositionally biased region" description="Polar residues" evidence="2">
    <location>
        <begin position="386"/>
        <end position="402"/>
    </location>
</feature>
<feature type="compositionally biased region" description="Polar residues" evidence="2">
    <location>
        <begin position="444"/>
        <end position="460"/>
    </location>
</feature>
<gene>
    <name evidence="1" type="primary">mdm34</name>
    <name type="ORF">SS1G_09664</name>
</gene>
<dbReference type="EMBL" id="CH476634">
    <property type="protein sequence ID" value="EDN93797.1"/>
    <property type="molecule type" value="Genomic_DNA"/>
</dbReference>
<dbReference type="RefSeq" id="XP_001589031.1">
    <property type="nucleotide sequence ID" value="XM_001588981.1"/>
</dbReference>
<dbReference type="STRING" id="665079.A7EWF5"/>
<dbReference type="GeneID" id="5485416"/>
<dbReference type="KEGG" id="ssl:SS1G_09664"/>
<dbReference type="VEuPathDB" id="FungiDB:sscle_01g000410"/>
<dbReference type="InParanoid" id="A7EWF5"/>
<dbReference type="OMA" id="VFRAWSG"/>
<dbReference type="OrthoDB" id="17927at2759"/>
<dbReference type="Proteomes" id="UP000001312">
    <property type="component" value="Unassembled WGS sequence"/>
</dbReference>
<dbReference type="GO" id="GO:0032865">
    <property type="term" value="C:ERMES complex"/>
    <property type="evidence" value="ECO:0000318"/>
    <property type="project" value="GO_Central"/>
</dbReference>
<dbReference type="GO" id="GO:0008289">
    <property type="term" value="F:lipid binding"/>
    <property type="evidence" value="ECO:0007669"/>
    <property type="project" value="UniProtKB-KW"/>
</dbReference>
<dbReference type="GO" id="GO:0000002">
    <property type="term" value="P:mitochondrial genome maintenance"/>
    <property type="evidence" value="ECO:0007669"/>
    <property type="project" value="UniProtKB-UniRule"/>
</dbReference>
<dbReference type="GO" id="GO:0007005">
    <property type="term" value="P:mitochondrion organization"/>
    <property type="evidence" value="ECO:0000318"/>
    <property type="project" value="GO_Central"/>
</dbReference>
<dbReference type="GO" id="GO:1990456">
    <property type="term" value="P:mitochondrion-endoplasmic reticulum membrane tethering"/>
    <property type="evidence" value="ECO:0000318"/>
    <property type="project" value="GO_Central"/>
</dbReference>
<dbReference type="GO" id="GO:0015914">
    <property type="term" value="P:phospholipid transport"/>
    <property type="evidence" value="ECO:0000318"/>
    <property type="project" value="GO_Central"/>
</dbReference>
<dbReference type="CDD" id="cd21673">
    <property type="entry name" value="SMP_Mdm34"/>
    <property type="match status" value="1"/>
</dbReference>
<dbReference type="HAMAP" id="MF_03105">
    <property type="entry name" value="Mdm34"/>
    <property type="match status" value="1"/>
</dbReference>
<dbReference type="InterPro" id="IPR027536">
    <property type="entry name" value="Mdm34"/>
</dbReference>
<dbReference type="InterPro" id="IPR031468">
    <property type="entry name" value="SMP_LBD"/>
</dbReference>
<dbReference type="PANTHER" id="PTHR28185">
    <property type="entry name" value="MITOCHONDRIAL DISTRIBUTION AND MORPHOLOGY PROTEIN 34"/>
    <property type="match status" value="1"/>
</dbReference>
<dbReference type="PANTHER" id="PTHR28185:SF1">
    <property type="entry name" value="MITOCHONDRIAL DISTRIBUTION AND MORPHOLOGY PROTEIN 34"/>
    <property type="match status" value="1"/>
</dbReference>
<dbReference type="PROSITE" id="PS51847">
    <property type="entry name" value="SMP"/>
    <property type="match status" value="1"/>
</dbReference>
<evidence type="ECO:0000255" key="1">
    <source>
        <dbReference type="HAMAP-Rule" id="MF_03105"/>
    </source>
</evidence>
<evidence type="ECO:0000256" key="2">
    <source>
        <dbReference type="SAM" id="MobiDB-lite"/>
    </source>
</evidence>
<sequence length="563" mass="61953">MAFNFNWSPLTADAEFYQRAQEMLTAALNKSPKPPIIKDDILVNELNLGSVPPDLEILEIGDLAEDRFRGIFKMCYSGDAFLTLKTRVQANPLNNHLFSKPSFTSPQPLAADAGLTIPLQITLSEIKLSAFIIVVFSKQKGLTLVFRNDPLESLKVSSTFDSIPFIKDYLQKEIEQQLRTLMMDELPAIIHRLSLRLWCPEYRGKEDQEMAEAVKKTKDEVAIDPFASPPQDAVDARGNVLDASEISNLSLDGGSEIHSLFSQKNLLRLAALTNSHRTLSLFTPSIRDAVFRAWAPSERGDSAGTTTPATTSLHRPQSSLGGQSTTYTFSNRSSDDGHGSMPSRPSLVNMNSATTGLSLGANRGSRSHTTRKKKNRVVNLRKSKTTDNVSESGESETASITAASEPIVQSRIPEEPEDIPVTPPPGKVRFNSIDLGDSPKKLQPSRSITPEQGNMNQIPTLTVEPSTPIHSENQKRPAYNQSSFTSYTSEKSATTPPHTQFSYPHGLHFSATESPSGILEQAWIMKMASELARRRHDKTAREGFWSTSSNGDDAPPAYEPKAL</sequence>
<organism>
    <name type="scientific">Sclerotinia sclerotiorum (strain ATCC 18683 / 1980 / Ss-1)</name>
    <name type="common">White mold</name>
    <name type="synonym">Whetzelinia sclerotiorum</name>
    <dbReference type="NCBI Taxonomy" id="665079"/>
    <lineage>
        <taxon>Eukaryota</taxon>
        <taxon>Fungi</taxon>
        <taxon>Dikarya</taxon>
        <taxon>Ascomycota</taxon>
        <taxon>Pezizomycotina</taxon>
        <taxon>Leotiomycetes</taxon>
        <taxon>Helotiales</taxon>
        <taxon>Sclerotiniaceae</taxon>
        <taxon>Sclerotinia</taxon>
    </lineage>
</organism>
<comment type="function">
    <text evidence="1">Component of the ERMES/MDM complex, which serves as a molecular tether to connect the endoplasmic reticulum (ER) and mitochondria. Components of this complex are involved in the control of mitochondrial shape and protein biogenesis, and function in nonvesicular lipid trafficking between the ER and mitochondria. Mdm34 is required for the interaction of the ER-resident membrane protein mmm1 and the outer mitochondrial membrane-resident beta-barrel protein mdm10.</text>
</comment>
<comment type="subunit">
    <text evidence="1">Component of the ER-mitochondria encounter structure (ERMES) or MDM complex, composed of mmm1, mdm10, mdm12 and mdm34.</text>
</comment>
<comment type="subcellular location">
    <subcellularLocation>
        <location evidence="1">Mitochondrion outer membrane</location>
        <topology evidence="1">Multi-pass membrane protein</topology>
    </subcellularLocation>
    <text evidence="1">The ERMES/MDM complex localizes to a few discrete foci (around 10 per single cell), that represent mitochondria-endoplasmic reticulum junctions. These foci are often found next to mtDNA nucleoids.</text>
</comment>
<comment type="domain">
    <text evidence="1">Lacks alpha-helical transmembrane segments, suggesting that it resides in the membrane via beta-sheet conformations similar to those predicted for other outer membrane proteins and porin.</text>
</comment>
<comment type="domain">
    <text evidence="1">The SMP-LTD domain is a barrel-like domain that can bind various types of glycerophospholipids in its interior and mediate their transfer between two adjacent bilayers.</text>
</comment>
<comment type="similarity">
    <text evidence="1">Belongs to the MDM34 family.</text>
</comment>
<accession>A7EWF5</accession>
<name>MDM34_SCLS1</name>
<keyword id="KW-0445">Lipid transport</keyword>
<keyword id="KW-0446">Lipid-binding</keyword>
<keyword id="KW-0472">Membrane</keyword>
<keyword id="KW-0496">Mitochondrion</keyword>
<keyword id="KW-1000">Mitochondrion outer membrane</keyword>
<keyword id="KW-1185">Reference proteome</keyword>
<keyword id="KW-0812">Transmembrane</keyword>
<keyword id="KW-1134">Transmembrane beta strand</keyword>
<keyword id="KW-0813">Transport</keyword>
<proteinExistence type="inferred from homology"/>